<proteinExistence type="inferred from homology"/>
<sequence length="140" mass="14996">MAKKVVTNIKLQVPAGQANPSPPIGPALGQHGVNIMEFCKAFNARTQGQEGMIIPVVITVYADRSFTFITKTPPAAVLLKKTAQIAKGSNEPNRTKVAKVTRAQVEEIAKLKMPDLNARDLDAAVLTIMGTARSMGIEVE</sequence>
<comment type="function">
    <text evidence="1">Forms part of the ribosomal stalk which helps the ribosome interact with GTP-bound translation factors.</text>
</comment>
<comment type="subunit">
    <text evidence="1">Part of the ribosomal stalk of the 50S ribosomal subunit. Interacts with L10 and the large rRNA to form the base of the stalk. L10 forms an elongated spine to which L12 dimers bind in a sequential fashion forming a multimeric L10(L12)X complex.</text>
</comment>
<comment type="PTM">
    <text evidence="1">One or more lysine residues are methylated.</text>
</comment>
<comment type="similarity">
    <text evidence="1">Belongs to the universal ribosomal protein uL11 family.</text>
</comment>
<organism>
    <name type="scientific">Syntrophobacter fumaroxidans (strain DSM 10017 / MPOB)</name>
    <dbReference type="NCBI Taxonomy" id="335543"/>
    <lineage>
        <taxon>Bacteria</taxon>
        <taxon>Pseudomonadati</taxon>
        <taxon>Thermodesulfobacteriota</taxon>
        <taxon>Syntrophobacteria</taxon>
        <taxon>Syntrophobacterales</taxon>
        <taxon>Syntrophobacteraceae</taxon>
        <taxon>Syntrophobacter</taxon>
    </lineage>
</organism>
<gene>
    <name evidence="1" type="primary">rplK</name>
    <name type="ordered locus">Sfum_1545</name>
</gene>
<accession>A0LII0</accession>
<reference key="1">
    <citation type="submission" date="2006-10" db="EMBL/GenBank/DDBJ databases">
        <title>Complete sequence of Syntrophobacter fumaroxidans MPOB.</title>
        <authorList>
            <consortium name="US DOE Joint Genome Institute"/>
            <person name="Copeland A."/>
            <person name="Lucas S."/>
            <person name="Lapidus A."/>
            <person name="Barry K."/>
            <person name="Detter J.C."/>
            <person name="Glavina del Rio T."/>
            <person name="Hammon N."/>
            <person name="Israni S."/>
            <person name="Pitluck S."/>
            <person name="Goltsman E.G."/>
            <person name="Martinez M."/>
            <person name="Schmutz J."/>
            <person name="Larimer F."/>
            <person name="Land M."/>
            <person name="Hauser L."/>
            <person name="Kyrpides N."/>
            <person name="Kim E."/>
            <person name="Boone D.R."/>
            <person name="Brockman F."/>
            <person name="Culley D."/>
            <person name="Ferry J."/>
            <person name="Gunsalus R."/>
            <person name="McInerney M.J."/>
            <person name="Morrison M."/>
            <person name="Plugge C."/>
            <person name="Rohlin L."/>
            <person name="Scholten J."/>
            <person name="Sieber J."/>
            <person name="Stams A.J.M."/>
            <person name="Worm P."/>
            <person name="Henstra A.M."/>
            <person name="Richardson P."/>
        </authorList>
    </citation>
    <scope>NUCLEOTIDE SEQUENCE [LARGE SCALE GENOMIC DNA]</scope>
    <source>
        <strain>DSM 10017 / MPOB</strain>
    </source>
</reference>
<evidence type="ECO:0000255" key="1">
    <source>
        <dbReference type="HAMAP-Rule" id="MF_00736"/>
    </source>
</evidence>
<evidence type="ECO:0000305" key="2"/>
<protein>
    <recommendedName>
        <fullName evidence="1">Large ribosomal subunit protein uL11</fullName>
    </recommendedName>
    <alternativeName>
        <fullName evidence="2">50S ribosomal protein L11</fullName>
    </alternativeName>
</protein>
<feature type="chain" id="PRO_1000046281" description="Large ribosomal subunit protein uL11">
    <location>
        <begin position="1"/>
        <end position="140"/>
    </location>
</feature>
<name>RL11_SYNFM</name>
<keyword id="KW-0488">Methylation</keyword>
<keyword id="KW-1185">Reference proteome</keyword>
<keyword id="KW-0687">Ribonucleoprotein</keyword>
<keyword id="KW-0689">Ribosomal protein</keyword>
<keyword id="KW-0694">RNA-binding</keyword>
<keyword id="KW-0699">rRNA-binding</keyword>
<dbReference type="EMBL" id="CP000478">
    <property type="protein sequence ID" value="ABK17232.1"/>
    <property type="molecule type" value="Genomic_DNA"/>
</dbReference>
<dbReference type="RefSeq" id="WP_011698403.1">
    <property type="nucleotide sequence ID" value="NC_008554.1"/>
</dbReference>
<dbReference type="SMR" id="A0LII0"/>
<dbReference type="FunCoup" id="A0LII0">
    <property type="interactions" value="629"/>
</dbReference>
<dbReference type="STRING" id="335543.Sfum_1545"/>
<dbReference type="KEGG" id="sfu:Sfum_1545"/>
<dbReference type="eggNOG" id="COG0080">
    <property type="taxonomic scope" value="Bacteria"/>
</dbReference>
<dbReference type="HOGENOM" id="CLU_074237_2_1_7"/>
<dbReference type="InParanoid" id="A0LII0"/>
<dbReference type="OrthoDB" id="9802408at2"/>
<dbReference type="Proteomes" id="UP000001784">
    <property type="component" value="Chromosome"/>
</dbReference>
<dbReference type="GO" id="GO:0022625">
    <property type="term" value="C:cytosolic large ribosomal subunit"/>
    <property type="evidence" value="ECO:0007669"/>
    <property type="project" value="TreeGrafter"/>
</dbReference>
<dbReference type="GO" id="GO:0070180">
    <property type="term" value="F:large ribosomal subunit rRNA binding"/>
    <property type="evidence" value="ECO:0007669"/>
    <property type="project" value="UniProtKB-UniRule"/>
</dbReference>
<dbReference type="GO" id="GO:0003735">
    <property type="term" value="F:structural constituent of ribosome"/>
    <property type="evidence" value="ECO:0007669"/>
    <property type="project" value="InterPro"/>
</dbReference>
<dbReference type="GO" id="GO:0006412">
    <property type="term" value="P:translation"/>
    <property type="evidence" value="ECO:0007669"/>
    <property type="project" value="UniProtKB-UniRule"/>
</dbReference>
<dbReference type="CDD" id="cd00349">
    <property type="entry name" value="Ribosomal_L11"/>
    <property type="match status" value="1"/>
</dbReference>
<dbReference type="FunFam" id="1.10.10.250:FF:000001">
    <property type="entry name" value="50S ribosomal protein L11"/>
    <property type="match status" value="1"/>
</dbReference>
<dbReference type="FunFam" id="3.30.1550.10:FF:000001">
    <property type="entry name" value="50S ribosomal protein L11"/>
    <property type="match status" value="1"/>
</dbReference>
<dbReference type="Gene3D" id="1.10.10.250">
    <property type="entry name" value="Ribosomal protein L11, C-terminal domain"/>
    <property type="match status" value="1"/>
</dbReference>
<dbReference type="Gene3D" id="3.30.1550.10">
    <property type="entry name" value="Ribosomal protein L11/L12, N-terminal domain"/>
    <property type="match status" value="1"/>
</dbReference>
<dbReference type="HAMAP" id="MF_00736">
    <property type="entry name" value="Ribosomal_uL11"/>
    <property type="match status" value="1"/>
</dbReference>
<dbReference type="InterPro" id="IPR000911">
    <property type="entry name" value="Ribosomal_uL11"/>
</dbReference>
<dbReference type="InterPro" id="IPR006519">
    <property type="entry name" value="Ribosomal_uL11_bac-typ"/>
</dbReference>
<dbReference type="InterPro" id="IPR020783">
    <property type="entry name" value="Ribosomal_uL11_C"/>
</dbReference>
<dbReference type="InterPro" id="IPR036769">
    <property type="entry name" value="Ribosomal_uL11_C_sf"/>
</dbReference>
<dbReference type="InterPro" id="IPR020784">
    <property type="entry name" value="Ribosomal_uL11_N"/>
</dbReference>
<dbReference type="InterPro" id="IPR036796">
    <property type="entry name" value="Ribosomal_uL11_N_sf"/>
</dbReference>
<dbReference type="NCBIfam" id="TIGR01632">
    <property type="entry name" value="L11_bact"/>
    <property type="match status" value="1"/>
</dbReference>
<dbReference type="PANTHER" id="PTHR11661">
    <property type="entry name" value="60S RIBOSOMAL PROTEIN L12"/>
    <property type="match status" value="1"/>
</dbReference>
<dbReference type="PANTHER" id="PTHR11661:SF1">
    <property type="entry name" value="LARGE RIBOSOMAL SUBUNIT PROTEIN UL11M"/>
    <property type="match status" value="1"/>
</dbReference>
<dbReference type="Pfam" id="PF00298">
    <property type="entry name" value="Ribosomal_L11"/>
    <property type="match status" value="1"/>
</dbReference>
<dbReference type="Pfam" id="PF03946">
    <property type="entry name" value="Ribosomal_L11_N"/>
    <property type="match status" value="1"/>
</dbReference>
<dbReference type="SMART" id="SM00649">
    <property type="entry name" value="RL11"/>
    <property type="match status" value="1"/>
</dbReference>
<dbReference type="SUPFAM" id="SSF54747">
    <property type="entry name" value="Ribosomal L11/L12e N-terminal domain"/>
    <property type="match status" value="1"/>
</dbReference>
<dbReference type="SUPFAM" id="SSF46906">
    <property type="entry name" value="Ribosomal protein L11, C-terminal domain"/>
    <property type="match status" value="1"/>
</dbReference>